<keyword id="KW-0997">Cell inner membrane</keyword>
<keyword id="KW-1003">Cell membrane</keyword>
<keyword id="KW-0472">Membrane</keyword>
<keyword id="KW-1185">Reference proteome</keyword>
<keyword id="KW-0812">Transmembrane</keyword>
<keyword id="KW-1133">Transmembrane helix</keyword>
<reference key="1">
    <citation type="journal article" date="2008" name="PLoS Genet.">
        <title>Complete genome sequence of the complex carbohydrate-degrading marine bacterium, Saccharophagus degradans strain 2-40 T.</title>
        <authorList>
            <person name="Weiner R.M."/>
            <person name="Taylor L.E. II"/>
            <person name="Henrissat B."/>
            <person name="Hauser L."/>
            <person name="Land M."/>
            <person name="Coutinho P.M."/>
            <person name="Rancurel C."/>
            <person name="Saunders E.H."/>
            <person name="Longmire A.G."/>
            <person name="Zhang H."/>
            <person name="Bayer E.A."/>
            <person name="Gilbert H.J."/>
            <person name="Larimer F."/>
            <person name="Zhulin I.B."/>
            <person name="Ekborg N.A."/>
            <person name="Lamed R."/>
            <person name="Richardson P.M."/>
            <person name="Borovok I."/>
            <person name="Hutcheson S."/>
        </authorList>
    </citation>
    <scope>NUCLEOTIDE SEQUENCE [LARGE SCALE GENOMIC DNA]</scope>
    <source>
        <strain>2-40 / ATCC 43961 / DSM 17024</strain>
    </source>
</reference>
<evidence type="ECO:0000255" key="1">
    <source>
        <dbReference type="HAMAP-Rule" id="MF_00672"/>
    </source>
</evidence>
<accession>Q21MB6</accession>
<name>Y901_SACD2</name>
<feature type="chain" id="PRO_0000391054" description="UPF0761 membrane protein Sde_0901">
    <location>
        <begin position="1"/>
        <end position="433"/>
    </location>
</feature>
<feature type="transmembrane region" description="Helical" evidence="1">
    <location>
        <begin position="46"/>
        <end position="66"/>
    </location>
</feature>
<feature type="transmembrane region" description="Helical" evidence="1">
    <location>
        <begin position="103"/>
        <end position="123"/>
    </location>
</feature>
<feature type="transmembrane region" description="Helical" evidence="1">
    <location>
        <begin position="142"/>
        <end position="162"/>
    </location>
</feature>
<feature type="transmembrane region" description="Helical" evidence="1">
    <location>
        <begin position="185"/>
        <end position="205"/>
    </location>
</feature>
<feature type="transmembrane region" description="Helical" evidence="1">
    <location>
        <begin position="217"/>
        <end position="237"/>
    </location>
</feature>
<feature type="transmembrane region" description="Helical" evidence="1">
    <location>
        <begin position="247"/>
        <end position="267"/>
    </location>
</feature>
<organism>
    <name type="scientific">Saccharophagus degradans (strain 2-40 / ATCC 43961 / DSM 17024)</name>
    <dbReference type="NCBI Taxonomy" id="203122"/>
    <lineage>
        <taxon>Bacteria</taxon>
        <taxon>Pseudomonadati</taxon>
        <taxon>Pseudomonadota</taxon>
        <taxon>Gammaproteobacteria</taxon>
        <taxon>Cellvibrionales</taxon>
        <taxon>Cellvibrionaceae</taxon>
        <taxon>Saccharophagus</taxon>
    </lineage>
</organism>
<comment type="subcellular location">
    <subcellularLocation>
        <location evidence="1">Cell inner membrane</location>
        <topology evidence="1">Multi-pass membrane protein</topology>
    </subcellularLocation>
</comment>
<comment type="similarity">
    <text evidence="1">Belongs to the UPF0761 family.</text>
</comment>
<proteinExistence type="inferred from homology"/>
<gene>
    <name type="ordered locus">Sde_0901</name>
</gene>
<dbReference type="EMBL" id="CP000282">
    <property type="protein sequence ID" value="ABD80163.1"/>
    <property type="molecule type" value="Genomic_DNA"/>
</dbReference>
<dbReference type="RefSeq" id="WP_011467384.1">
    <property type="nucleotide sequence ID" value="NC_007912.1"/>
</dbReference>
<dbReference type="SMR" id="Q21MB6"/>
<dbReference type="STRING" id="203122.Sde_0901"/>
<dbReference type="GeneID" id="98612582"/>
<dbReference type="KEGG" id="sde:Sde_0901"/>
<dbReference type="eggNOG" id="COG1295">
    <property type="taxonomic scope" value="Bacteria"/>
</dbReference>
<dbReference type="HOGENOM" id="CLU_032288_1_0_6"/>
<dbReference type="OrthoDB" id="9808671at2"/>
<dbReference type="Proteomes" id="UP000001947">
    <property type="component" value="Chromosome"/>
</dbReference>
<dbReference type="GO" id="GO:0005886">
    <property type="term" value="C:plasma membrane"/>
    <property type="evidence" value="ECO:0007669"/>
    <property type="project" value="UniProtKB-SubCell"/>
</dbReference>
<dbReference type="HAMAP" id="MF_00672">
    <property type="entry name" value="UPF0761"/>
    <property type="match status" value="1"/>
</dbReference>
<dbReference type="InterPro" id="IPR023679">
    <property type="entry name" value="UPF0761_bac"/>
</dbReference>
<dbReference type="InterPro" id="IPR017039">
    <property type="entry name" value="Virul_fac_BrkB"/>
</dbReference>
<dbReference type="NCBIfam" id="TIGR00765">
    <property type="entry name" value="yihY_not_rbn"/>
    <property type="match status" value="1"/>
</dbReference>
<dbReference type="PANTHER" id="PTHR30213">
    <property type="entry name" value="INNER MEMBRANE PROTEIN YHJD"/>
    <property type="match status" value="1"/>
</dbReference>
<dbReference type="PANTHER" id="PTHR30213:SF0">
    <property type="entry name" value="UPF0761 MEMBRANE PROTEIN YIHY"/>
    <property type="match status" value="1"/>
</dbReference>
<dbReference type="Pfam" id="PF03631">
    <property type="entry name" value="Virul_fac_BrkB"/>
    <property type="match status" value="1"/>
</dbReference>
<protein>
    <recommendedName>
        <fullName evidence="1">UPF0761 membrane protein Sde_0901</fullName>
    </recommendedName>
</protein>
<sequence>MWDIAKVKASIKPFVFALGRFFGNLYKEFVEKGCQKSAAALTYMSLFAMVPLMAVFYSMFSMFPAFDGVAQQLQDMIFSHFVPETGSEVQQYLANFSQQARNLSAAGAGLLVVTAYLMLTNIEKTFNAIWGVKAARRGITSFLLYWAVLTIGPLLLGAGLAMSTYLLSLKIIVNEYDAIGVTNLFFSYLPLFTTSAAFTLLFAAVPNCRVPIKFALIGGILTAVCFELLKIGFGWVVANSSFSQIYGAFAVVPLFLLWVNLLWMIILGGAVFVRTLAERGYAHSSSRYTDLMAVLQILAIFKEKSRTGESVTDGDCVRAGVGLVHWQQLRSKLTEKNWIAVTDSGFYVLCRDLSDVTVWDAACLVGATLAELEKTPRKRSRDGEWREEFSKRKDLLADDAKAHYGISLQALFSPQQVEELLEELPDEQSEKSK</sequence>